<organism>
    <name type="scientific">Salmonella enteritidis PT4 (strain P125109)</name>
    <dbReference type="NCBI Taxonomy" id="550537"/>
    <lineage>
        <taxon>Bacteria</taxon>
        <taxon>Pseudomonadati</taxon>
        <taxon>Pseudomonadota</taxon>
        <taxon>Gammaproteobacteria</taxon>
        <taxon>Enterobacterales</taxon>
        <taxon>Enterobacteriaceae</taxon>
        <taxon>Salmonella</taxon>
    </lineage>
</organism>
<comment type="function">
    <text evidence="1">Part of the ABC transporter complex BtuCDF involved in vitamin B12 import. Responsible for energy coupling to the transport system.</text>
</comment>
<comment type="catalytic activity">
    <reaction evidence="1">
        <text>an R-cob(III)alamin(out) + ATP + H2O = an R-cob(III)alamin(in) + ADP + phosphate + H(+)</text>
        <dbReference type="Rhea" id="RHEA:17873"/>
        <dbReference type="ChEBI" id="CHEBI:15377"/>
        <dbReference type="ChEBI" id="CHEBI:15378"/>
        <dbReference type="ChEBI" id="CHEBI:30616"/>
        <dbReference type="ChEBI" id="CHEBI:43474"/>
        <dbReference type="ChEBI" id="CHEBI:140785"/>
        <dbReference type="ChEBI" id="CHEBI:456216"/>
        <dbReference type="EC" id="7.6.2.8"/>
    </reaction>
</comment>
<comment type="subunit">
    <text evidence="1">The complex is composed of two ATP-binding proteins (BtuD), two transmembrane proteins (BtuC) and a solute-binding protein (BtuF).</text>
</comment>
<comment type="subcellular location">
    <subcellularLocation>
        <location evidence="1">Cell inner membrane</location>
        <topology evidence="1">Peripheral membrane protein</topology>
    </subcellularLocation>
</comment>
<comment type="similarity">
    <text evidence="1">Belongs to the ABC transporter superfamily. Vitamin B12 importer (TC 3.A.1.13.1) family.</text>
</comment>
<keyword id="KW-0067">ATP-binding</keyword>
<keyword id="KW-0997">Cell inner membrane</keyword>
<keyword id="KW-1003">Cell membrane</keyword>
<keyword id="KW-0472">Membrane</keyword>
<keyword id="KW-0547">Nucleotide-binding</keyword>
<keyword id="KW-1278">Translocase</keyword>
<keyword id="KW-0813">Transport</keyword>
<reference key="1">
    <citation type="journal article" date="2008" name="Genome Res.">
        <title>Comparative genome analysis of Salmonella enteritidis PT4 and Salmonella gallinarum 287/91 provides insights into evolutionary and host adaptation pathways.</title>
        <authorList>
            <person name="Thomson N.R."/>
            <person name="Clayton D.J."/>
            <person name="Windhorst D."/>
            <person name="Vernikos G."/>
            <person name="Davidson S."/>
            <person name="Churcher C."/>
            <person name="Quail M.A."/>
            <person name="Stevens M."/>
            <person name="Jones M.A."/>
            <person name="Watson M."/>
            <person name="Barron A."/>
            <person name="Layton A."/>
            <person name="Pickard D."/>
            <person name="Kingsley R.A."/>
            <person name="Bignell A."/>
            <person name="Clark L."/>
            <person name="Harris B."/>
            <person name="Ormond D."/>
            <person name="Abdellah Z."/>
            <person name="Brooks K."/>
            <person name="Cherevach I."/>
            <person name="Chillingworth T."/>
            <person name="Woodward J."/>
            <person name="Norberczak H."/>
            <person name="Lord A."/>
            <person name="Arrowsmith C."/>
            <person name="Jagels K."/>
            <person name="Moule S."/>
            <person name="Mungall K."/>
            <person name="Saunders M."/>
            <person name="Whitehead S."/>
            <person name="Chabalgoity J.A."/>
            <person name="Maskell D."/>
            <person name="Humphreys T."/>
            <person name="Roberts M."/>
            <person name="Barrow P.A."/>
            <person name="Dougan G."/>
            <person name="Parkhill J."/>
        </authorList>
    </citation>
    <scope>NUCLEOTIDE SEQUENCE [LARGE SCALE GENOMIC DNA]</scope>
    <source>
        <strain>P125109</strain>
    </source>
</reference>
<name>BTUD_SALEP</name>
<feature type="chain" id="PRO_1000134667" description="Vitamin B12 import ATP-binding protein BtuD">
    <location>
        <begin position="1"/>
        <end position="249"/>
    </location>
</feature>
<feature type="domain" description="ABC transporter" evidence="1">
    <location>
        <begin position="1"/>
        <end position="233"/>
    </location>
</feature>
<feature type="binding site" evidence="1">
    <location>
        <begin position="33"/>
        <end position="40"/>
    </location>
    <ligand>
        <name>ATP</name>
        <dbReference type="ChEBI" id="CHEBI:30616"/>
    </ligand>
</feature>
<sequence>MSQLMQLKDVAESTRLGPLSGEVSAGEILHLVGPNGAGKSTLLARMAGLTSGEGSIRFGGAPLEAWATATLAQHRAYLAQQQNPPFAMPVWHYLTLHQPDKTRTGQLNEVADMLGLGDKLGRSVNQLSGGEWQRVRLAAVVLQIHPDANPVGQLLLLDEPMNSLDVAQQNALDRVLHHLCQAGIAIVMSSHDLNHTLRHAHKAWLLKRGKLIACGRREEVLTPSYLAQAYGLRFRRLDVEGHPTLISAT</sequence>
<proteinExistence type="inferred from homology"/>
<evidence type="ECO:0000255" key="1">
    <source>
        <dbReference type="HAMAP-Rule" id="MF_01005"/>
    </source>
</evidence>
<protein>
    <recommendedName>
        <fullName evidence="1">Vitamin B12 import ATP-binding protein BtuD</fullName>
        <ecNumber evidence="1">7.6.2.8</ecNumber>
    </recommendedName>
    <alternativeName>
        <fullName evidence="1">Vitamin B12-transporting ATPase</fullName>
    </alternativeName>
</protein>
<dbReference type="EC" id="7.6.2.8" evidence="1"/>
<dbReference type="EMBL" id="AM933172">
    <property type="protein sequence ID" value="CAR33284.1"/>
    <property type="molecule type" value="Genomic_DNA"/>
</dbReference>
<dbReference type="RefSeq" id="WP_000080608.1">
    <property type="nucleotide sequence ID" value="NC_011294.1"/>
</dbReference>
<dbReference type="SMR" id="B5QVV9"/>
<dbReference type="KEGG" id="set:SEN1702"/>
<dbReference type="HOGENOM" id="CLU_000604_1_11_6"/>
<dbReference type="Proteomes" id="UP000000613">
    <property type="component" value="Chromosome"/>
</dbReference>
<dbReference type="GO" id="GO:0005886">
    <property type="term" value="C:plasma membrane"/>
    <property type="evidence" value="ECO:0007669"/>
    <property type="project" value="UniProtKB-SubCell"/>
</dbReference>
<dbReference type="GO" id="GO:0015420">
    <property type="term" value="F:ABC-type vitamin B12 transporter activity"/>
    <property type="evidence" value="ECO:0007669"/>
    <property type="project" value="UniProtKB-UniRule"/>
</dbReference>
<dbReference type="GO" id="GO:0005524">
    <property type="term" value="F:ATP binding"/>
    <property type="evidence" value="ECO:0007669"/>
    <property type="project" value="UniProtKB-KW"/>
</dbReference>
<dbReference type="GO" id="GO:0016887">
    <property type="term" value="F:ATP hydrolysis activity"/>
    <property type="evidence" value="ECO:0007669"/>
    <property type="project" value="InterPro"/>
</dbReference>
<dbReference type="CDD" id="cd03214">
    <property type="entry name" value="ABC_Iron-Siderophores_B12_Hemin"/>
    <property type="match status" value="1"/>
</dbReference>
<dbReference type="FunFam" id="3.40.50.300:FF:000462">
    <property type="entry name" value="Vitamin B12 import ATP-binding protein BtuD"/>
    <property type="match status" value="1"/>
</dbReference>
<dbReference type="Gene3D" id="3.40.50.300">
    <property type="entry name" value="P-loop containing nucleotide triphosphate hydrolases"/>
    <property type="match status" value="1"/>
</dbReference>
<dbReference type="HAMAP" id="MF_01005">
    <property type="entry name" value="BtuD"/>
    <property type="match status" value="1"/>
</dbReference>
<dbReference type="InterPro" id="IPR003593">
    <property type="entry name" value="AAA+_ATPase"/>
</dbReference>
<dbReference type="InterPro" id="IPR003439">
    <property type="entry name" value="ABC_transporter-like_ATP-bd"/>
</dbReference>
<dbReference type="InterPro" id="IPR017871">
    <property type="entry name" value="ABC_transporter-like_CS"/>
</dbReference>
<dbReference type="InterPro" id="IPR023693">
    <property type="entry name" value="ABC_transptr_BtuD"/>
</dbReference>
<dbReference type="InterPro" id="IPR050153">
    <property type="entry name" value="Metal_Ion_Import_ABC"/>
</dbReference>
<dbReference type="InterPro" id="IPR027417">
    <property type="entry name" value="P-loop_NTPase"/>
</dbReference>
<dbReference type="NCBIfam" id="NF002981">
    <property type="entry name" value="PRK03695.1"/>
    <property type="match status" value="1"/>
</dbReference>
<dbReference type="PANTHER" id="PTHR42734">
    <property type="entry name" value="METAL TRANSPORT SYSTEM ATP-BINDING PROTEIN TM_0124-RELATED"/>
    <property type="match status" value="1"/>
</dbReference>
<dbReference type="PANTHER" id="PTHR42734:SF18">
    <property type="entry name" value="VITAMIN B12 IMPORT ATP-BINDING PROTEIN BTUD"/>
    <property type="match status" value="1"/>
</dbReference>
<dbReference type="Pfam" id="PF00005">
    <property type="entry name" value="ABC_tran"/>
    <property type="match status" value="1"/>
</dbReference>
<dbReference type="SMART" id="SM00382">
    <property type="entry name" value="AAA"/>
    <property type="match status" value="1"/>
</dbReference>
<dbReference type="SUPFAM" id="SSF52540">
    <property type="entry name" value="P-loop containing nucleoside triphosphate hydrolases"/>
    <property type="match status" value="1"/>
</dbReference>
<dbReference type="PROSITE" id="PS00211">
    <property type="entry name" value="ABC_TRANSPORTER_1"/>
    <property type="match status" value="1"/>
</dbReference>
<dbReference type="PROSITE" id="PS50893">
    <property type="entry name" value="ABC_TRANSPORTER_2"/>
    <property type="match status" value="1"/>
</dbReference>
<accession>B5QVV9</accession>
<gene>
    <name evidence="1" type="primary">btuD</name>
    <name type="ordered locus">SEN1702</name>
</gene>